<accession>Q1XDQ0</accession>
<feature type="chain" id="PRO_0000277357" description="Putative single-stranded DNA-binding protein ycf41">
    <location>
        <begin position="1"/>
        <end position="111"/>
    </location>
</feature>
<feature type="domain" description="SSB">
    <location>
        <begin position="1"/>
        <end position="98"/>
    </location>
</feature>
<keyword id="KW-0150">Chloroplast</keyword>
<keyword id="KW-0238">DNA-binding</keyword>
<keyword id="KW-0934">Plastid</keyword>
<gene>
    <name type="primary">ycf41</name>
</gene>
<name>YCF41_PYRYE</name>
<organism>
    <name type="scientific">Pyropia yezoensis</name>
    <name type="common">Susabi-nori</name>
    <name type="synonym">Porphyra yezoensis</name>
    <dbReference type="NCBI Taxonomy" id="2788"/>
    <lineage>
        <taxon>Eukaryota</taxon>
        <taxon>Rhodophyta</taxon>
        <taxon>Bangiophyceae</taxon>
        <taxon>Bangiales</taxon>
        <taxon>Bangiaceae</taxon>
        <taxon>Pyropia</taxon>
    </lineage>
</organism>
<proteinExistence type="predicted"/>
<protein>
    <recommendedName>
        <fullName>Putative single-stranded DNA-binding protein ycf41</fullName>
    </recommendedName>
</protein>
<comment type="subcellular location">
    <subcellularLocation>
        <location>Plastid</location>
        <location>Chloroplast</location>
    </subcellularLocation>
</comment>
<dbReference type="EMBL" id="AP006715">
    <property type="protein sequence ID" value="BAE92361.1"/>
    <property type="molecule type" value="Genomic_DNA"/>
</dbReference>
<dbReference type="RefSeq" id="YP_536918.1">
    <property type="nucleotide sequence ID" value="NC_007932.1"/>
</dbReference>
<dbReference type="SMR" id="Q1XDQ0"/>
<dbReference type="GO" id="GO:0009507">
    <property type="term" value="C:chloroplast"/>
    <property type="evidence" value="ECO:0007669"/>
    <property type="project" value="UniProtKB-SubCell"/>
</dbReference>
<dbReference type="GO" id="GO:0003677">
    <property type="term" value="F:DNA binding"/>
    <property type="evidence" value="ECO:0007669"/>
    <property type="project" value="UniProtKB-KW"/>
</dbReference>
<geneLocation type="chloroplast"/>
<reference key="1">
    <citation type="submission" date="2003-11" db="EMBL/GenBank/DDBJ databases">
        <title>Whole genome sequence of Porphyra yezoensis chloroplast.</title>
        <authorList>
            <person name="Kunimoto M."/>
            <person name="Morishima K."/>
            <person name="Yoshikawa M."/>
            <person name="Fukuda S."/>
            <person name="Kobayashi T."/>
            <person name="Kobayashi M."/>
            <person name="Okazaki T."/>
            <person name="Ohara I."/>
            <person name="Nakayama I."/>
        </authorList>
    </citation>
    <scope>NUCLEOTIDE SEQUENCE [LARGE SCALE GENOMIC DNA]</scope>
    <source>
        <strain>U-51</strain>
    </source>
</reference>
<sequence>MNSCTLLVQILSCKSIRISENKSQIIKLKARLLKRKRLVIINLTIWNKKSSYTFKQLKKLDYVIIEGKLHRNNKIFTNKTKQVGKDLVFSTSRIFKYKSLLKNKDIDLFIK</sequence>